<sequence length="385" mass="44674">MDTGSASIKDYETVLTDIEDSIAVSSEEVLNNQELRLKNTLHEITSSILAINEENKFVNPLRNDESLDVEGKEVFVNPKILSAKIKEFNKLMELLKLTYLEQETLDYFFRFTLSSTKPLQLDSEKDPQFVKLNERVNDLKEEISNVQESKIEQIKAEIQETGHNFAEKQDLINELYLEATGDIENCWDSLNELKNLTNKEDKNMMGEKDTILNSSDSDDFVEETYTNWQKLLFLQKQNQRLTKELKEMHEVKNQIIRKGEQSKKEDSGHLMANESELCQSINLLTKFWEKHFLLKGSKTTILNFEIFTQLGKVQFEIKDMQYIIAISLSDLKRPMIKDITILQKAGGNIVTDIEANSKFNNKYRNNTKVQIFEVMDDIISELTNE</sequence>
<proteinExistence type="inferred from homology"/>
<organism>
    <name type="scientific">Saccharomyces cerevisiae (strain JAY291)</name>
    <name type="common">Baker's yeast</name>
    <dbReference type="NCBI Taxonomy" id="574961"/>
    <lineage>
        <taxon>Eukaryota</taxon>
        <taxon>Fungi</taxon>
        <taxon>Dikarya</taxon>
        <taxon>Ascomycota</taxon>
        <taxon>Saccharomycotina</taxon>
        <taxon>Saccharomycetes</taxon>
        <taxon>Saccharomycetales</taxon>
        <taxon>Saccharomycetaceae</taxon>
        <taxon>Saccharomyces</taxon>
    </lineage>
</organism>
<reference key="1">
    <citation type="journal article" date="2009" name="Genome Res.">
        <title>Genome structure of a Saccharomyces cerevisiae strain widely used in bioethanol production.</title>
        <authorList>
            <person name="Argueso J.L."/>
            <person name="Carazzolle M.F."/>
            <person name="Mieczkowski P.A."/>
            <person name="Duarte F.M."/>
            <person name="Netto O.V.C."/>
            <person name="Missawa S.K."/>
            <person name="Galzerani F."/>
            <person name="Costa G.G.L."/>
            <person name="Vidal R.O."/>
            <person name="Noronha M.F."/>
            <person name="Dominska M."/>
            <person name="Andrietta M.G.S."/>
            <person name="Andrietta S.R."/>
            <person name="Cunha A.F."/>
            <person name="Gomes L.H."/>
            <person name="Tavares F.C.A."/>
            <person name="Alcarde A.R."/>
            <person name="Dietrich F.S."/>
            <person name="McCusker J.H."/>
            <person name="Petes T.D."/>
            <person name="Pereira G.A.G."/>
        </authorList>
    </citation>
    <scope>NUCLEOTIDE SEQUENCE [LARGE SCALE GENOMIC DNA]</scope>
    <source>
        <strain>JAY291</strain>
    </source>
</reference>
<accession>C7GKW3</accession>
<feature type="chain" id="PRO_0000408566" description="Outer kinetochore KNL1 complex subunit KRE28">
    <location>
        <begin position="1"/>
        <end position="385"/>
    </location>
</feature>
<feature type="coiled-coil region" evidence="2">
    <location>
        <begin position="128"/>
        <end position="175"/>
    </location>
</feature>
<feature type="coiled-coil region" evidence="2">
    <location>
        <begin position="229"/>
        <end position="258"/>
    </location>
</feature>
<evidence type="ECO:0000250" key="1">
    <source>
        <dbReference type="UniProtKB" id="Q04431"/>
    </source>
</evidence>
<evidence type="ECO:0000255" key="2"/>
<evidence type="ECO:0000305" key="3"/>
<gene>
    <name type="primary">KRE28</name>
    <name type="ORF">C1Q_00785</name>
</gene>
<comment type="function">
    <text evidence="1">Acts as a component of the outer kinetochore KNL1 complex that facilitates microtubule-kinetochore interactions and the spindle assembly checkpoint. Kinetochores, consisting of a centromere-associated inner segment and a microtubule-contacting outer segment, play a crucial role in chromosome segregation by mediating the physical connection between centromeric DNA and spindle microtubules. The outer kinetochore is made up of the ten-subunit KMN network, comprising the MIS12, NDC80 and KNL1 complexes, and auxiliary microtubule-associated components; together they connect the outer kinetochore with the inner kinetochore, bind microtubules, and mediate interactions with mitotic checkpoint proteins that delay anaphase until chromosomes are bioriented on the spindle. The KNL1 complex is required for kinetochore binding by the kMAPs (kinetochore-bound microtubule-associated proteins) BIM1, BIK1 and SLK19, and motors CIN8 and KAR3. Required during meiosis.</text>
</comment>
<comment type="subunit">
    <text evidence="1">Component of the KNL1/SPC105 complex composed of SPC105 and KRE28. Part of the ten-subunit outer kinetochore KMN network that includes the KNL1, MIS12 and NDC80 complexes. Interacts with the MIS12 complex subunits MTW1 (via C-terminus) and NSL1 (via C-terminus). Interacts with the NDC80 complex subunits SPC24 and SPC25. Interacts with CNN1 (via N-terminus).</text>
</comment>
<comment type="subcellular location">
    <subcellularLocation>
        <location evidence="1">Nucleus</location>
    </subcellularLocation>
    <subcellularLocation>
        <location evidence="1">Chromosome</location>
        <location evidence="1">Centromere</location>
        <location evidence="1">Kinetochore</location>
    </subcellularLocation>
</comment>
<comment type="similarity">
    <text evidence="3">Belongs to the KRE28 family.</text>
</comment>
<name>ZWINT_YEAS2</name>
<protein>
    <recommendedName>
        <fullName evidence="3">Outer kinetochore KNL1 complex subunit KRE28</fullName>
    </recommendedName>
    <alternativeName>
        <fullName>Spindle pole body component KRE28</fullName>
    </alternativeName>
</protein>
<keyword id="KW-0137">Centromere</keyword>
<keyword id="KW-0158">Chromosome</keyword>
<keyword id="KW-0175">Coiled coil</keyword>
<keyword id="KW-0995">Kinetochore</keyword>
<keyword id="KW-0539">Nucleus</keyword>
<dbReference type="EMBL" id="ACFL01000026">
    <property type="protein sequence ID" value="EEU08564.1"/>
    <property type="molecule type" value="Genomic_DNA"/>
</dbReference>
<dbReference type="SMR" id="C7GKW3"/>
<dbReference type="Proteomes" id="UP000008073">
    <property type="component" value="Unassembled WGS sequence"/>
</dbReference>
<dbReference type="GO" id="GO:0000776">
    <property type="term" value="C:kinetochore"/>
    <property type="evidence" value="ECO:0000250"/>
    <property type="project" value="UniProtKB"/>
</dbReference>
<dbReference type="GO" id="GO:0180019">
    <property type="term" value="C:Knl1/Spc105 complex"/>
    <property type="evidence" value="ECO:0000250"/>
    <property type="project" value="UniProtKB"/>
</dbReference>
<dbReference type="GO" id="GO:0005634">
    <property type="term" value="C:nucleus"/>
    <property type="evidence" value="ECO:0007669"/>
    <property type="project" value="UniProtKB-SubCell"/>
</dbReference>
<dbReference type="GO" id="GO:0031619">
    <property type="term" value="P:homologous chromosome orientation in meiotic metaphase I"/>
    <property type="evidence" value="ECO:0000250"/>
    <property type="project" value="UniProtKB"/>
</dbReference>
<dbReference type="GO" id="GO:1905325">
    <property type="term" value="P:regulation of meiosis I spindle assembly checkpoint"/>
    <property type="evidence" value="ECO:0000250"/>
    <property type="project" value="UniProtKB"/>
</dbReference>
<dbReference type="InterPro" id="IPR031361">
    <property type="entry name" value="Kre28"/>
</dbReference>
<dbReference type="Pfam" id="PF17097">
    <property type="entry name" value="Kre28"/>
    <property type="match status" value="1"/>
</dbReference>